<evidence type="ECO:0000255" key="1">
    <source>
        <dbReference type="HAMAP-Rule" id="MF_01620"/>
    </source>
</evidence>
<comment type="function">
    <text evidence="1">Catalyzes the final step of fatty acid oxidation in which acetyl-CoA is released and the CoA ester of a fatty acid two carbons shorter is formed.</text>
</comment>
<comment type="catalytic activity">
    <reaction evidence="1">
        <text>an acyl-CoA + acetyl-CoA = a 3-oxoacyl-CoA + CoA</text>
        <dbReference type="Rhea" id="RHEA:21564"/>
        <dbReference type="ChEBI" id="CHEBI:57287"/>
        <dbReference type="ChEBI" id="CHEBI:57288"/>
        <dbReference type="ChEBI" id="CHEBI:58342"/>
        <dbReference type="ChEBI" id="CHEBI:90726"/>
        <dbReference type="EC" id="2.3.1.16"/>
    </reaction>
</comment>
<comment type="pathway">
    <text evidence="1">Lipid metabolism; fatty acid beta-oxidation.</text>
</comment>
<comment type="subunit">
    <text evidence="1">Heterotetramer of two alpha chains (FadB) and two beta chains (FadA).</text>
</comment>
<comment type="subcellular location">
    <subcellularLocation>
        <location evidence="1">Cytoplasm</location>
    </subcellularLocation>
</comment>
<comment type="similarity">
    <text evidence="1">Belongs to the thiolase-like superfamily. Thiolase family.</text>
</comment>
<proteinExistence type="inferred from homology"/>
<protein>
    <recommendedName>
        <fullName evidence="1">3-ketoacyl-CoA thiolase</fullName>
        <ecNumber evidence="1">2.3.1.16</ecNumber>
    </recommendedName>
    <alternativeName>
        <fullName evidence="1">Acetyl-CoA acyltransferase</fullName>
    </alternativeName>
    <alternativeName>
        <fullName evidence="1">Beta-ketothiolase</fullName>
    </alternativeName>
    <alternativeName>
        <fullName evidence="1">Fatty acid oxidation complex subunit beta</fullName>
    </alternativeName>
</protein>
<organism>
    <name type="scientific">Vibrio cholerae serotype O1 (strain ATCC 39315 / El Tor Inaba N16961)</name>
    <dbReference type="NCBI Taxonomy" id="243277"/>
    <lineage>
        <taxon>Bacteria</taxon>
        <taxon>Pseudomonadati</taxon>
        <taxon>Pseudomonadota</taxon>
        <taxon>Gammaproteobacteria</taxon>
        <taxon>Vibrionales</taxon>
        <taxon>Vibrionaceae</taxon>
        <taxon>Vibrio</taxon>
    </lineage>
</organism>
<name>FADA_VIBCH</name>
<gene>
    <name evidence="1" type="primary">fadA</name>
    <name type="ordered locus">VC_2759</name>
</gene>
<accession>Q9KNI0</accession>
<reference key="1">
    <citation type="journal article" date="2000" name="Nature">
        <title>DNA sequence of both chromosomes of the cholera pathogen Vibrio cholerae.</title>
        <authorList>
            <person name="Heidelberg J.F."/>
            <person name="Eisen J.A."/>
            <person name="Nelson W.C."/>
            <person name="Clayton R.A."/>
            <person name="Gwinn M.L."/>
            <person name="Dodson R.J."/>
            <person name="Haft D.H."/>
            <person name="Hickey E.K."/>
            <person name="Peterson J.D."/>
            <person name="Umayam L.A."/>
            <person name="Gill S.R."/>
            <person name="Nelson K.E."/>
            <person name="Read T.D."/>
            <person name="Tettelin H."/>
            <person name="Richardson D.L."/>
            <person name="Ermolaeva M.D."/>
            <person name="Vamathevan J.J."/>
            <person name="Bass S."/>
            <person name="Qin H."/>
            <person name="Dragoi I."/>
            <person name="Sellers P."/>
            <person name="McDonald L.A."/>
            <person name="Utterback T.R."/>
            <person name="Fleischmann R.D."/>
            <person name="Nierman W.C."/>
            <person name="White O."/>
            <person name="Salzberg S.L."/>
            <person name="Smith H.O."/>
            <person name="Colwell R.R."/>
            <person name="Mekalanos J.J."/>
            <person name="Venter J.C."/>
            <person name="Fraser C.M."/>
        </authorList>
    </citation>
    <scope>NUCLEOTIDE SEQUENCE [LARGE SCALE GENOMIC DNA]</scope>
    <source>
        <strain>ATCC 39315 / El Tor Inaba N16961</strain>
    </source>
</reference>
<keyword id="KW-0012">Acyltransferase</keyword>
<keyword id="KW-0963">Cytoplasm</keyword>
<keyword id="KW-0276">Fatty acid metabolism</keyword>
<keyword id="KW-0442">Lipid degradation</keyword>
<keyword id="KW-0443">Lipid metabolism</keyword>
<keyword id="KW-1185">Reference proteome</keyword>
<keyword id="KW-0808">Transferase</keyword>
<sequence length="387" mass="40842">MNTVVIVDCLRTPMGRSKGGAFRHQRAEDLSAHLMKGILARNPQVNPKEIEDIYWGCVQQTLEQGFNVARNAALLAGLPIEIGAVTVNRLCGSSMQALHDAARAIMVGDAEICLVGGVEHMGHVPMTHGVDFHPGLSKNVAKAAGMMGLTAEMLGKLHGISRQQQDEFAARSHARAHAATLEGRFKNEILPTEGHAADGTLFTLDYDEVIRPETTVAGLAELRPVFDPANGTVTAGTSSALSDGASAMLVMSEQKAKALGLTIRARIKAMAVAGCDPSIMGYGPVPATHKALQRAGLTMQDMDVVELNEAFAAQSLPCAKDLGLLEMMDDKVNLNGGAIALGHPLGCSGTRISTTLINLMEAKDAKYGLATMCIGLGQGIATIFERP</sequence>
<feature type="chain" id="PRO_0000206395" description="3-ketoacyl-CoA thiolase">
    <location>
        <begin position="1"/>
        <end position="387"/>
    </location>
</feature>
<feature type="active site" description="Acyl-thioester intermediate" evidence="1">
    <location>
        <position position="91"/>
    </location>
</feature>
<feature type="active site" description="Proton acceptor" evidence="1">
    <location>
        <position position="343"/>
    </location>
</feature>
<feature type="active site" description="Proton acceptor" evidence="1">
    <location>
        <position position="373"/>
    </location>
</feature>
<dbReference type="EC" id="2.3.1.16" evidence="1"/>
<dbReference type="EMBL" id="AE003852">
    <property type="protein sequence ID" value="AAF95898.1"/>
    <property type="molecule type" value="Genomic_DNA"/>
</dbReference>
<dbReference type="PIR" id="A82036">
    <property type="entry name" value="A82036"/>
</dbReference>
<dbReference type="RefSeq" id="NP_232385.1">
    <property type="nucleotide sequence ID" value="NC_002505.1"/>
</dbReference>
<dbReference type="RefSeq" id="WP_001099264.1">
    <property type="nucleotide sequence ID" value="NZ_LT906614.1"/>
</dbReference>
<dbReference type="SMR" id="Q9KNI0"/>
<dbReference type="STRING" id="243277.VC_2759"/>
<dbReference type="DNASU" id="2614936"/>
<dbReference type="EnsemblBacteria" id="AAF95898">
    <property type="protein sequence ID" value="AAF95898"/>
    <property type="gene ID" value="VC_2759"/>
</dbReference>
<dbReference type="KEGG" id="vch:VC_2759"/>
<dbReference type="PATRIC" id="fig|243277.26.peg.2634"/>
<dbReference type="eggNOG" id="COG0183">
    <property type="taxonomic scope" value="Bacteria"/>
</dbReference>
<dbReference type="HOGENOM" id="CLU_031026_2_2_6"/>
<dbReference type="UniPathway" id="UPA00659"/>
<dbReference type="Proteomes" id="UP000000584">
    <property type="component" value="Chromosome 1"/>
</dbReference>
<dbReference type="GO" id="GO:0005737">
    <property type="term" value="C:cytoplasm"/>
    <property type="evidence" value="ECO:0007669"/>
    <property type="project" value="UniProtKB-SubCell"/>
</dbReference>
<dbReference type="GO" id="GO:0003988">
    <property type="term" value="F:acetyl-CoA C-acyltransferase activity"/>
    <property type="evidence" value="ECO:0000318"/>
    <property type="project" value="GO_Central"/>
</dbReference>
<dbReference type="GO" id="GO:0006635">
    <property type="term" value="P:fatty acid beta-oxidation"/>
    <property type="evidence" value="ECO:0000318"/>
    <property type="project" value="GO_Central"/>
</dbReference>
<dbReference type="GO" id="GO:0010124">
    <property type="term" value="P:phenylacetate catabolic process"/>
    <property type="evidence" value="ECO:0000318"/>
    <property type="project" value="GO_Central"/>
</dbReference>
<dbReference type="CDD" id="cd00751">
    <property type="entry name" value="thiolase"/>
    <property type="match status" value="1"/>
</dbReference>
<dbReference type="FunFam" id="3.40.47.10:FF:000010">
    <property type="entry name" value="Acetyl-CoA acetyltransferase (Thiolase)"/>
    <property type="match status" value="1"/>
</dbReference>
<dbReference type="Gene3D" id="3.40.47.10">
    <property type="match status" value="2"/>
</dbReference>
<dbReference type="HAMAP" id="MF_01620">
    <property type="entry name" value="FadA"/>
    <property type="match status" value="1"/>
</dbReference>
<dbReference type="InterPro" id="IPR012805">
    <property type="entry name" value="FadA"/>
</dbReference>
<dbReference type="InterPro" id="IPR002155">
    <property type="entry name" value="Thiolase"/>
</dbReference>
<dbReference type="InterPro" id="IPR016039">
    <property type="entry name" value="Thiolase-like"/>
</dbReference>
<dbReference type="InterPro" id="IPR050215">
    <property type="entry name" value="Thiolase-like_sf_Thiolase"/>
</dbReference>
<dbReference type="InterPro" id="IPR020615">
    <property type="entry name" value="Thiolase_acyl_enz_int_AS"/>
</dbReference>
<dbReference type="InterPro" id="IPR020610">
    <property type="entry name" value="Thiolase_AS"/>
</dbReference>
<dbReference type="InterPro" id="IPR020617">
    <property type="entry name" value="Thiolase_C"/>
</dbReference>
<dbReference type="InterPro" id="IPR020613">
    <property type="entry name" value="Thiolase_CS"/>
</dbReference>
<dbReference type="InterPro" id="IPR020616">
    <property type="entry name" value="Thiolase_N"/>
</dbReference>
<dbReference type="NCBIfam" id="TIGR01930">
    <property type="entry name" value="AcCoA-C-Actrans"/>
    <property type="match status" value="1"/>
</dbReference>
<dbReference type="NCBIfam" id="TIGR02445">
    <property type="entry name" value="fadA"/>
    <property type="match status" value="1"/>
</dbReference>
<dbReference type="NCBIfam" id="NF006510">
    <property type="entry name" value="PRK08947.1"/>
    <property type="match status" value="1"/>
</dbReference>
<dbReference type="PANTHER" id="PTHR43853:SF11">
    <property type="entry name" value="3-KETOACYL-COA THIOLASE FADA"/>
    <property type="match status" value="1"/>
</dbReference>
<dbReference type="PANTHER" id="PTHR43853">
    <property type="entry name" value="3-KETOACYL-COA THIOLASE, PEROXISOMAL"/>
    <property type="match status" value="1"/>
</dbReference>
<dbReference type="Pfam" id="PF02803">
    <property type="entry name" value="Thiolase_C"/>
    <property type="match status" value="1"/>
</dbReference>
<dbReference type="Pfam" id="PF00108">
    <property type="entry name" value="Thiolase_N"/>
    <property type="match status" value="1"/>
</dbReference>
<dbReference type="PIRSF" id="PIRSF000429">
    <property type="entry name" value="Ac-CoA_Ac_transf"/>
    <property type="match status" value="1"/>
</dbReference>
<dbReference type="SUPFAM" id="SSF53901">
    <property type="entry name" value="Thiolase-like"/>
    <property type="match status" value="2"/>
</dbReference>
<dbReference type="PROSITE" id="PS00098">
    <property type="entry name" value="THIOLASE_1"/>
    <property type="match status" value="1"/>
</dbReference>
<dbReference type="PROSITE" id="PS00737">
    <property type="entry name" value="THIOLASE_2"/>
    <property type="match status" value="1"/>
</dbReference>
<dbReference type="PROSITE" id="PS00099">
    <property type="entry name" value="THIOLASE_3"/>
    <property type="match status" value="1"/>
</dbReference>